<keyword id="KW-0217">Developmental protein</keyword>
<keyword id="KW-0238">DNA-binding</keyword>
<keyword id="KW-0539">Nucleus</keyword>
<keyword id="KW-1185">Reference proteome</keyword>
<keyword id="KW-0804">Transcription</keyword>
<keyword id="KW-0805">Transcription regulation</keyword>
<sequence length="177" mass="19791">MSSPRERGKSLMESSGSEPPVTPSRYESQKRRDWNTFGQYLKNQRPPVPMSHCSCNHVLDFLRYLDQFGKTKVHVPGCMFYGQPEPPAPCTCPLRQAWGSLDALIGRLRAAYEENGGPPETNPFASGAIRVYLREVRECQAKARGIPYKKKKKKKPTPEMGGGREDSSSSSSSFSFS</sequence>
<name>LSH10_ARATH</name>
<organism>
    <name type="scientific">Arabidopsis thaliana</name>
    <name type="common">Mouse-ear cress</name>
    <dbReference type="NCBI Taxonomy" id="3702"/>
    <lineage>
        <taxon>Eukaryota</taxon>
        <taxon>Viridiplantae</taxon>
        <taxon>Streptophyta</taxon>
        <taxon>Embryophyta</taxon>
        <taxon>Tracheophyta</taxon>
        <taxon>Spermatophyta</taxon>
        <taxon>Magnoliopsida</taxon>
        <taxon>eudicotyledons</taxon>
        <taxon>Gunneridae</taxon>
        <taxon>Pentapetalae</taxon>
        <taxon>rosids</taxon>
        <taxon>malvids</taxon>
        <taxon>Brassicales</taxon>
        <taxon>Brassicaceae</taxon>
        <taxon>Camelineae</taxon>
        <taxon>Arabidopsis</taxon>
    </lineage>
</organism>
<comment type="function">
    <text evidence="1">Probable transcription regulator that acts as a developmental regulator by promoting cell growth in response to light.</text>
</comment>
<comment type="subcellular location">
    <subcellularLocation>
        <location evidence="1">Nucleus</location>
    </subcellularLocation>
</comment>
<comment type="similarity">
    <text evidence="4">Belongs to the plant homeotic and developmental regulators ALOG protein family.</text>
</comment>
<feature type="chain" id="PRO_0000425297" description="Protein LIGHT-DEPENDENT SHORT HYPOCOTYLS 10">
    <location>
        <begin position="1"/>
        <end position="177"/>
    </location>
</feature>
<feature type="domain" description="ALOG" evidence="2">
    <location>
        <begin position="25"/>
        <end position="152"/>
    </location>
</feature>
<feature type="region of interest" description="Disordered" evidence="3">
    <location>
        <begin position="1"/>
        <end position="31"/>
    </location>
</feature>
<feature type="region of interest" description="Disordered" evidence="3">
    <location>
        <begin position="144"/>
        <end position="177"/>
    </location>
</feature>
<feature type="short sequence motif" description="Nuclear localization signal" evidence="1">
    <location>
        <begin position="150"/>
        <end position="154"/>
    </location>
</feature>
<feature type="compositionally biased region" description="Basic and acidic residues" evidence="3">
    <location>
        <begin position="1"/>
        <end position="10"/>
    </location>
</feature>
<feature type="compositionally biased region" description="Low complexity" evidence="3">
    <location>
        <begin position="168"/>
        <end position="177"/>
    </location>
</feature>
<reference key="1">
    <citation type="submission" date="1999-12" db="EMBL/GenBank/DDBJ databases">
        <authorList>
            <person name="Matityahu A."/>
            <person name="Goldway M."/>
        </authorList>
    </citation>
    <scope>NUCLEOTIDE SEQUENCE [MRNA]</scope>
</reference>
<reference key="2">
    <citation type="journal article" date="2007" name="Genetics">
        <title>The genetic architecture of shoot branching in Arabidopsis thaliana: a comparative assessment of candidate gene associations vs. quantitative trait locus mapping.</title>
        <authorList>
            <person name="Ehrenreich I.M."/>
            <person name="Stafford P.A."/>
            <person name="Purugganan M.D."/>
        </authorList>
    </citation>
    <scope>NUCLEOTIDE SEQUENCE [GENOMIC DNA]</scope>
    <source>
        <strain>cv. Ag-0</strain>
        <strain>cv. An-1</strain>
        <strain>cv. Br-0</strain>
        <strain>cv. C24</strain>
        <strain>cv. Ct-1</strain>
        <strain>cv. Cvi-1</strain>
        <strain>cv. Edi-0</strain>
        <strain>cv. Ga-0</strain>
        <strain>cv. Kas-2</strain>
        <strain>cv. Kin-0</strain>
        <strain>cv. Landsberg erecta</strain>
        <strain>cv. Ll-0</strain>
        <strain>cv. Lz-0</strain>
        <strain>cv. Ms-0</strain>
        <strain>cv. Mt-0</strain>
        <strain>cv. Nd-1</strain>
        <strain>cv. Nok-3</strain>
        <strain>cv. Oy-0</strain>
        <strain>cv. Se-0</strain>
        <strain>cv. Sorbo</strain>
        <strain>cv. Tsu-1</strain>
        <strain>cv. Van-0</strain>
        <strain>cv. Wa-1</strain>
        <strain>cv. Wassilewskija</strain>
    </source>
</reference>
<reference key="3">
    <citation type="journal article" date="1999" name="Nature">
        <title>Sequence and analysis of chromosome 2 of the plant Arabidopsis thaliana.</title>
        <authorList>
            <person name="Lin X."/>
            <person name="Kaul S."/>
            <person name="Rounsley S.D."/>
            <person name="Shea T.P."/>
            <person name="Benito M.-I."/>
            <person name="Town C.D."/>
            <person name="Fujii C.Y."/>
            <person name="Mason T.M."/>
            <person name="Bowman C.L."/>
            <person name="Barnstead M.E."/>
            <person name="Feldblyum T.V."/>
            <person name="Buell C.R."/>
            <person name="Ketchum K.A."/>
            <person name="Lee J.J."/>
            <person name="Ronning C.M."/>
            <person name="Koo H.L."/>
            <person name="Moffat K.S."/>
            <person name="Cronin L.A."/>
            <person name="Shen M."/>
            <person name="Pai G."/>
            <person name="Van Aken S."/>
            <person name="Umayam L."/>
            <person name="Tallon L.J."/>
            <person name="Gill J.E."/>
            <person name="Adams M.D."/>
            <person name="Carrera A.J."/>
            <person name="Creasy T.H."/>
            <person name="Goodman H.M."/>
            <person name="Somerville C.R."/>
            <person name="Copenhaver G.P."/>
            <person name="Preuss D."/>
            <person name="Nierman W.C."/>
            <person name="White O."/>
            <person name="Eisen J.A."/>
            <person name="Salzberg S.L."/>
            <person name="Fraser C.M."/>
            <person name="Venter J.C."/>
        </authorList>
    </citation>
    <scope>NUCLEOTIDE SEQUENCE [LARGE SCALE GENOMIC DNA]</scope>
    <source>
        <strain>cv. Columbia</strain>
    </source>
</reference>
<reference key="4">
    <citation type="journal article" date="2017" name="Plant J.">
        <title>Araport11: a complete reannotation of the Arabidopsis thaliana reference genome.</title>
        <authorList>
            <person name="Cheng C.Y."/>
            <person name="Krishnakumar V."/>
            <person name="Chan A.P."/>
            <person name="Thibaud-Nissen F."/>
            <person name="Schobel S."/>
            <person name="Town C.D."/>
        </authorList>
    </citation>
    <scope>GENOME REANNOTATION</scope>
    <source>
        <strain>cv. Columbia</strain>
    </source>
</reference>
<reference key="5">
    <citation type="journal article" date="2002" name="Science">
        <title>Functional annotation of a full-length Arabidopsis cDNA collection.</title>
        <authorList>
            <person name="Seki M."/>
            <person name="Narusaka M."/>
            <person name="Kamiya A."/>
            <person name="Ishida J."/>
            <person name="Satou M."/>
            <person name="Sakurai T."/>
            <person name="Nakajima M."/>
            <person name="Enju A."/>
            <person name="Akiyama K."/>
            <person name="Oono Y."/>
            <person name="Muramatsu M."/>
            <person name="Hayashizaki Y."/>
            <person name="Kawai J."/>
            <person name="Carninci P."/>
            <person name="Itoh M."/>
            <person name="Ishii Y."/>
            <person name="Arakawa T."/>
            <person name="Shibata K."/>
            <person name="Shinagawa A."/>
            <person name="Shinozaki K."/>
        </authorList>
    </citation>
    <scope>NUCLEOTIDE SEQUENCE [LARGE SCALE MRNA]</scope>
    <source>
        <strain>cv. Columbia</strain>
    </source>
</reference>
<reference key="6">
    <citation type="journal article" date="2003" name="Science">
        <title>Empirical analysis of transcriptional activity in the Arabidopsis genome.</title>
        <authorList>
            <person name="Yamada K."/>
            <person name="Lim J."/>
            <person name="Dale J.M."/>
            <person name="Chen H."/>
            <person name="Shinn P."/>
            <person name="Palm C.J."/>
            <person name="Southwick A.M."/>
            <person name="Wu H.C."/>
            <person name="Kim C.J."/>
            <person name="Nguyen M."/>
            <person name="Pham P.K."/>
            <person name="Cheuk R.F."/>
            <person name="Karlin-Newmann G."/>
            <person name="Liu S.X."/>
            <person name="Lam B."/>
            <person name="Sakano H."/>
            <person name="Wu T."/>
            <person name="Yu G."/>
            <person name="Miranda M."/>
            <person name="Quach H.L."/>
            <person name="Tripp M."/>
            <person name="Chang C.H."/>
            <person name="Lee J.M."/>
            <person name="Toriumi M.J."/>
            <person name="Chan M.M."/>
            <person name="Tang C.C."/>
            <person name="Onodera C.S."/>
            <person name="Deng J.M."/>
            <person name="Akiyama K."/>
            <person name="Ansari Y."/>
            <person name="Arakawa T."/>
            <person name="Banh J."/>
            <person name="Banno F."/>
            <person name="Bowser L."/>
            <person name="Brooks S.Y."/>
            <person name="Carninci P."/>
            <person name="Chao Q."/>
            <person name="Choy N."/>
            <person name="Enju A."/>
            <person name="Goldsmith A.D."/>
            <person name="Gurjal M."/>
            <person name="Hansen N.F."/>
            <person name="Hayashizaki Y."/>
            <person name="Johnson-Hopson C."/>
            <person name="Hsuan V.W."/>
            <person name="Iida K."/>
            <person name="Karnes M."/>
            <person name="Khan S."/>
            <person name="Koesema E."/>
            <person name="Ishida J."/>
            <person name="Jiang P.X."/>
            <person name="Jones T."/>
            <person name="Kawai J."/>
            <person name="Kamiya A."/>
            <person name="Meyers C."/>
            <person name="Nakajima M."/>
            <person name="Narusaka M."/>
            <person name="Seki M."/>
            <person name="Sakurai T."/>
            <person name="Satou M."/>
            <person name="Tamse R."/>
            <person name="Vaysberg M."/>
            <person name="Wallender E.K."/>
            <person name="Wong C."/>
            <person name="Yamamura Y."/>
            <person name="Yuan S."/>
            <person name="Shinozaki K."/>
            <person name="Davis R.W."/>
            <person name="Theologis A."/>
            <person name="Ecker J.R."/>
        </authorList>
    </citation>
    <scope>NUCLEOTIDE SEQUENCE [LARGE SCALE MRNA]</scope>
    <source>
        <strain>cv. Columbia</strain>
    </source>
</reference>
<reference key="7">
    <citation type="journal article" date="2004" name="Plant J.">
        <title>Overexpression of LSH1, a member of an uncharacterised gene family, causes enhanced light regulation of seedling development.</title>
        <authorList>
            <person name="Zhao L."/>
            <person name="Nakazawa M."/>
            <person name="Takase T."/>
            <person name="Manabe K."/>
            <person name="Kobayashi M."/>
            <person name="Seki M."/>
            <person name="Shinozaki K."/>
            <person name="Matsui M."/>
        </authorList>
    </citation>
    <scope>GENE FAMILY</scope>
    <scope>NOMENCLATURE</scope>
    <source>
        <strain>cv. Columbia</strain>
    </source>
</reference>
<reference key="8">
    <citation type="journal article" date="2011" name="Proc. Natl. Acad. Sci. U.S.A.">
        <title>Organ boundary1 defines a gene expressed at the junction between the shoot apical meristem and lateral organs.</title>
        <authorList>
            <person name="Cho E."/>
            <person name="Zambryski P.C."/>
        </authorList>
    </citation>
    <scope>GENE FAMILY</scope>
</reference>
<reference key="9">
    <citation type="journal article" date="2012" name="Biol. Direct">
        <title>ALOG domains: provenance of plant homeotic and developmental regulators from the DNA-binding domain of a novel class of DIRS1-type retroposons.</title>
        <authorList>
            <person name="Iyer L.M."/>
            <person name="Aravind L."/>
        </authorList>
    </citation>
    <scope>DNA-BINDING</scope>
    <scope>GENE FAMILY</scope>
</reference>
<accession>Q9S7R3</accession>
<protein>
    <recommendedName>
        <fullName>Protein LIGHT-DEPENDENT SHORT HYPOCOTYLS 10</fullName>
    </recommendedName>
    <alternativeName>
        <fullName>Protein ORGAN BOUNDARY 10</fullName>
    </alternativeName>
</protein>
<gene>
    <name type="primary">LSH10</name>
    <name type="synonym">OBO10</name>
    <name type="ordered locus">At2g42610</name>
    <name type="ORF">F14N22</name>
</gene>
<evidence type="ECO:0000250" key="1"/>
<evidence type="ECO:0000255" key="2">
    <source>
        <dbReference type="PROSITE-ProRule" id="PRU01033"/>
    </source>
</evidence>
<evidence type="ECO:0000256" key="3">
    <source>
        <dbReference type="SAM" id="MobiDB-lite"/>
    </source>
</evidence>
<evidence type="ECO:0000305" key="4"/>
<dbReference type="EMBL" id="AF218765">
    <property type="protein sequence ID" value="AAF24517.1"/>
    <property type="molecule type" value="mRNA"/>
</dbReference>
<dbReference type="EMBL" id="EF597874">
    <property type="protein sequence ID" value="ABQ85148.1"/>
    <property type="molecule type" value="Genomic_DNA"/>
</dbReference>
<dbReference type="EMBL" id="EF597875">
    <property type="protein sequence ID" value="ABQ85149.1"/>
    <property type="molecule type" value="Genomic_DNA"/>
</dbReference>
<dbReference type="EMBL" id="EF597876">
    <property type="protein sequence ID" value="ABQ85150.1"/>
    <property type="molecule type" value="Genomic_DNA"/>
</dbReference>
<dbReference type="EMBL" id="EF597877">
    <property type="protein sequence ID" value="ABQ85151.1"/>
    <property type="molecule type" value="Genomic_DNA"/>
</dbReference>
<dbReference type="EMBL" id="EF597878">
    <property type="protein sequence ID" value="ABQ85152.1"/>
    <property type="molecule type" value="Genomic_DNA"/>
</dbReference>
<dbReference type="EMBL" id="EF597879">
    <property type="protein sequence ID" value="ABQ85153.1"/>
    <property type="molecule type" value="Genomic_DNA"/>
</dbReference>
<dbReference type="EMBL" id="EF597880">
    <property type="protein sequence ID" value="ABQ85154.1"/>
    <property type="molecule type" value="Genomic_DNA"/>
</dbReference>
<dbReference type="EMBL" id="EF597881">
    <property type="protein sequence ID" value="ABQ85155.1"/>
    <property type="molecule type" value="Genomic_DNA"/>
</dbReference>
<dbReference type="EMBL" id="EF597882">
    <property type="protein sequence ID" value="ABQ85156.1"/>
    <property type="molecule type" value="Genomic_DNA"/>
</dbReference>
<dbReference type="EMBL" id="EF597883">
    <property type="protein sequence ID" value="ABQ85157.1"/>
    <property type="molecule type" value="Genomic_DNA"/>
</dbReference>
<dbReference type="EMBL" id="EF597884">
    <property type="protein sequence ID" value="ABQ85158.1"/>
    <property type="molecule type" value="Genomic_DNA"/>
</dbReference>
<dbReference type="EMBL" id="EF597885">
    <property type="protein sequence ID" value="ABQ85159.1"/>
    <property type="molecule type" value="Genomic_DNA"/>
</dbReference>
<dbReference type="EMBL" id="EF597886">
    <property type="protein sequence ID" value="ABQ85160.1"/>
    <property type="molecule type" value="Genomic_DNA"/>
</dbReference>
<dbReference type="EMBL" id="EF597887">
    <property type="protein sequence ID" value="ABQ85161.1"/>
    <property type="molecule type" value="Genomic_DNA"/>
</dbReference>
<dbReference type="EMBL" id="EF597888">
    <property type="protein sequence ID" value="ABQ85162.1"/>
    <property type="molecule type" value="Genomic_DNA"/>
</dbReference>
<dbReference type="EMBL" id="EF597889">
    <property type="protein sequence ID" value="ABQ85163.1"/>
    <property type="molecule type" value="Genomic_DNA"/>
</dbReference>
<dbReference type="EMBL" id="EF597890">
    <property type="protein sequence ID" value="ABQ85164.1"/>
    <property type="molecule type" value="Genomic_DNA"/>
</dbReference>
<dbReference type="EMBL" id="EF597891">
    <property type="protein sequence ID" value="ABQ85165.1"/>
    <property type="molecule type" value="Genomic_DNA"/>
</dbReference>
<dbReference type="EMBL" id="EF597892">
    <property type="protein sequence ID" value="ABQ85166.1"/>
    <property type="molecule type" value="Genomic_DNA"/>
</dbReference>
<dbReference type="EMBL" id="EF597893">
    <property type="protein sequence ID" value="ABQ85167.1"/>
    <property type="molecule type" value="Genomic_DNA"/>
</dbReference>
<dbReference type="EMBL" id="EF597894">
    <property type="protein sequence ID" value="ABQ85168.1"/>
    <property type="molecule type" value="Genomic_DNA"/>
</dbReference>
<dbReference type="EMBL" id="EF597895">
    <property type="protein sequence ID" value="ABQ85169.1"/>
    <property type="molecule type" value="Genomic_DNA"/>
</dbReference>
<dbReference type="EMBL" id="EF597896">
    <property type="protein sequence ID" value="ABQ85170.1"/>
    <property type="molecule type" value="Genomic_DNA"/>
</dbReference>
<dbReference type="EMBL" id="EF597897">
    <property type="protein sequence ID" value="ABQ85171.1"/>
    <property type="molecule type" value="Genomic_DNA"/>
</dbReference>
<dbReference type="EMBL" id="AC007087">
    <property type="protein sequence ID" value="AAD22993.1"/>
    <property type="molecule type" value="Genomic_DNA"/>
</dbReference>
<dbReference type="EMBL" id="CP002685">
    <property type="protein sequence ID" value="AEC10147.1"/>
    <property type="molecule type" value="Genomic_DNA"/>
</dbReference>
<dbReference type="EMBL" id="CP002685">
    <property type="protein sequence ID" value="AEC10148.1"/>
    <property type="molecule type" value="Genomic_DNA"/>
</dbReference>
<dbReference type="EMBL" id="AK118714">
    <property type="protein sequence ID" value="BAC43308.1"/>
    <property type="molecule type" value="mRNA"/>
</dbReference>
<dbReference type="EMBL" id="AK119048">
    <property type="protein sequence ID" value="BAC43624.1"/>
    <property type="molecule type" value="mRNA"/>
</dbReference>
<dbReference type="EMBL" id="BT003740">
    <property type="protein sequence ID" value="AAO39968.1"/>
    <property type="molecule type" value="mRNA"/>
</dbReference>
<dbReference type="PIR" id="A84856">
    <property type="entry name" value="A84856"/>
</dbReference>
<dbReference type="RefSeq" id="NP_565978.1">
    <property type="nucleotide sequence ID" value="NM_129822.3"/>
</dbReference>
<dbReference type="RefSeq" id="NP_850374.1">
    <property type="nucleotide sequence ID" value="NM_180043.1"/>
</dbReference>
<dbReference type="SMR" id="Q9S7R3"/>
<dbReference type="BioGRID" id="4198">
    <property type="interactions" value="2"/>
</dbReference>
<dbReference type="FunCoup" id="Q9S7R3">
    <property type="interactions" value="22"/>
</dbReference>
<dbReference type="STRING" id="3702.Q9S7R3"/>
<dbReference type="GlyGen" id="Q9S7R3">
    <property type="glycosylation" value="1 site"/>
</dbReference>
<dbReference type="iPTMnet" id="Q9S7R3"/>
<dbReference type="PaxDb" id="3702-AT2G42610.1"/>
<dbReference type="ProteomicsDB" id="238616"/>
<dbReference type="EnsemblPlants" id="AT2G42610.1">
    <property type="protein sequence ID" value="AT2G42610.1"/>
    <property type="gene ID" value="AT2G42610"/>
</dbReference>
<dbReference type="EnsemblPlants" id="AT2G42610.2">
    <property type="protein sequence ID" value="AT2G42610.2"/>
    <property type="gene ID" value="AT2G42610"/>
</dbReference>
<dbReference type="GeneID" id="818861"/>
<dbReference type="Gramene" id="AT2G42610.1">
    <property type="protein sequence ID" value="AT2G42610.1"/>
    <property type="gene ID" value="AT2G42610"/>
</dbReference>
<dbReference type="Gramene" id="AT2G42610.2">
    <property type="protein sequence ID" value="AT2G42610.2"/>
    <property type="gene ID" value="AT2G42610"/>
</dbReference>
<dbReference type="KEGG" id="ath:AT2G42610"/>
<dbReference type="Araport" id="AT2G42610"/>
<dbReference type="TAIR" id="AT2G42610">
    <property type="gene designation" value="LSH10"/>
</dbReference>
<dbReference type="eggNOG" id="ENOG502QTET">
    <property type="taxonomic scope" value="Eukaryota"/>
</dbReference>
<dbReference type="HOGENOM" id="CLU_071168_1_1_1"/>
<dbReference type="InParanoid" id="Q9S7R3"/>
<dbReference type="OMA" id="IQGCMFY"/>
<dbReference type="OrthoDB" id="1906822at2759"/>
<dbReference type="PhylomeDB" id="Q9S7R3"/>
<dbReference type="PRO" id="PR:Q9S7R3"/>
<dbReference type="Proteomes" id="UP000006548">
    <property type="component" value="Chromosome 2"/>
</dbReference>
<dbReference type="ExpressionAtlas" id="Q9S7R3">
    <property type="expression patterns" value="baseline and differential"/>
</dbReference>
<dbReference type="GO" id="GO:0005634">
    <property type="term" value="C:nucleus"/>
    <property type="evidence" value="ECO:0000250"/>
    <property type="project" value="UniProtKB"/>
</dbReference>
<dbReference type="GO" id="GO:0003677">
    <property type="term" value="F:DNA binding"/>
    <property type="evidence" value="ECO:0007669"/>
    <property type="project" value="UniProtKB-KW"/>
</dbReference>
<dbReference type="GO" id="GO:0009299">
    <property type="term" value="P:mRNA transcription"/>
    <property type="evidence" value="ECO:0000250"/>
    <property type="project" value="UniProtKB"/>
</dbReference>
<dbReference type="GO" id="GO:0090698">
    <property type="term" value="P:post-embryonic plant morphogenesis"/>
    <property type="evidence" value="ECO:0000250"/>
    <property type="project" value="UniProtKB"/>
</dbReference>
<dbReference type="InterPro" id="IPR040222">
    <property type="entry name" value="ALOG"/>
</dbReference>
<dbReference type="InterPro" id="IPR006936">
    <property type="entry name" value="ALOG_dom"/>
</dbReference>
<dbReference type="PANTHER" id="PTHR31165">
    <property type="entry name" value="PROTEIN G1-LIKE2"/>
    <property type="match status" value="1"/>
</dbReference>
<dbReference type="PANTHER" id="PTHR31165:SF10">
    <property type="entry name" value="PROTEIN LIGHT-DEPENDENT SHORT HYPOCOTYLS 10"/>
    <property type="match status" value="1"/>
</dbReference>
<dbReference type="Pfam" id="PF04852">
    <property type="entry name" value="ALOG_dom"/>
    <property type="match status" value="1"/>
</dbReference>
<dbReference type="PROSITE" id="PS51697">
    <property type="entry name" value="ALOG"/>
    <property type="match status" value="1"/>
</dbReference>
<proteinExistence type="evidence at protein level"/>